<reference key="1">
    <citation type="journal article" date="1987" name="Mol. Gen. Genet.">
        <title>Sequence homology to the Drosophila per locus in higher plant nuclear DNA and in Acetabularia chloroplast DNA.</title>
        <authorList>
            <person name="Li-Weber M."/>
            <person name="de Groot E.J."/>
            <person name="Schweiger H.G."/>
        </authorList>
    </citation>
    <scope>NUCLEOTIDE SEQUENCE [GENOMIC DNA]</scope>
</reference>
<comment type="subcellular location">
    <subcellularLocation>
        <location>Plastid</location>
        <location>Chloroplast</location>
    </subcellularLocation>
</comment>
<keyword id="KW-0090">Biological rhythms</keyword>
<keyword id="KW-0150">Chloroplast</keyword>
<keyword id="KW-0934">Plastid</keyword>
<keyword id="KW-0677">Repeat</keyword>
<accession>P12347</accession>
<organism>
    <name type="scientific">Acetabularia acetabulum</name>
    <name type="common">Mermaid's wine glass</name>
    <name type="synonym">Acetabularia mediterranea</name>
    <dbReference type="NCBI Taxonomy" id="35845"/>
    <lineage>
        <taxon>Eukaryota</taxon>
        <taxon>Viridiplantae</taxon>
        <taxon>Chlorophyta</taxon>
        <taxon>Ulvophyceae</taxon>
        <taxon>TCBD clade</taxon>
        <taxon>Dasycladales</taxon>
        <taxon>Polyphysaceae</taxon>
        <taxon>Acetabularia</taxon>
    </lineage>
</organism>
<geneLocation type="chloroplast"/>
<name>PER_ACEAT</name>
<dbReference type="EMBL" id="X05806">
    <property type="protein sequence ID" value="CAC34964.3"/>
    <property type="molecule type" value="Genomic_DNA"/>
</dbReference>
<dbReference type="PIR" id="S00273">
    <property type="entry name" value="S00273"/>
</dbReference>
<dbReference type="SMR" id="P12347"/>
<dbReference type="GO" id="GO:0009507">
    <property type="term" value="C:chloroplast"/>
    <property type="evidence" value="ECO:0007669"/>
    <property type="project" value="UniProtKB-SubCell"/>
</dbReference>
<dbReference type="GO" id="GO:0048511">
    <property type="term" value="P:rhythmic process"/>
    <property type="evidence" value="ECO:0007669"/>
    <property type="project" value="UniProtKB-KW"/>
</dbReference>
<dbReference type="InterPro" id="IPR052258">
    <property type="entry name" value="Diverse_Func_Domain-Protein"/>
</dbReference>
<dbReference type="PANTHER" id="PTHR37612">
    <property type="entry name" value="FIBROIN HEAVY CHAIN FIB-H LIKE PROTEIN"/>
    <property type="match status" value="1"/>
</dbReference>
<dbReference type="PANTHER" id="PTHR37612:SF20">
    <property type="entry name" value="PER-HEXAMER REPEAT PROTEIN 5-RELATED"/>
    <property type="match status" value="1"/>
</dbReference>
<sequence length="174" mass="16878">MCLPFFTSINSSGLFKAVSWRIIESFLLELFFIFYSSFSWSSSLSSSEGTGAGTGTGTGTGTGTGTGTGTGTGTGTGTGTGTGTGTGTGTGTGTGTGTGTGTGTGTGTGTGTGTGTGTGTGTGTGTGTGTGTGTGTGTIWEGELVFFYAECKGYPKIKGVFWVVSFFYDTAKNV</sequence>
<proteinExistence type="predicted"/>
<feature type="chain" id="PRO_0000217415" description="Period clock protein">
    <location>
        <begin position="1"/>
        <end position="174"/>
    </location>
</feature>
<feature type="repeat" description="1">
    <location>
        <begin position="49"/>
        <end position="50"/>
    </location>
</feature>
<feature type="repeat" description="2">
    <location>
        <begin position="51"/>
        <end position="52"/>
    </location>
</feature>
<feature type="repeat" description="3">
    <location>
        <begin position="53"/>
        <end position="54"/>
    </location>
</feature>
<feature type="repeat" description="4">
    <location>
        <begin position="55"/>
        <end position="56"/>
    </location>
</feature>
<feature type="repeat" description="5">
    <location>
        <begin position="57"/>
        <end position="58"/>
    </location>
</feature>
<feature type="repeat" description="6">
    <location>
        <begin position="59"/>
        <end position="60"/>
    </location>
</feature>
<feature type="repeat" description="7">
    <location>
        <begin position="61"/>
        <end position="62"/>
    </location>
</feature>
<feature type="repeat" description="8">
    <location>
        <begin position="63"/>
        <end position="64"/>
    </location>
</feature>
<feature type="repeat" description="9">
    <location>
        <begin position="65"/>
        <end position="66"/>
    </location>
</feature>
<feature type="repeat" description="10">
    <location>
        <begin position="67"/>
        <end position="68"/>
    </location>
</feature>
<feature type="repeat" description="11">
    <location>
        <begin position="69"/>
        <end position="70"/>
    </location>
</feature>
<feature type="repeat" description="12">
    <location>
        <begin position="71"/>
        <end position="72"/>
    </location>
</feature>
<feature type="repeat" description="13">
    <location>
        <begin position="73"/>
        <end position="74"/>
    </location>
</feature>
<feature type="repeat" description="14">
    <location>
        <begin position="75"/>
        <end position="76"/>
    </location>
</feature>
<feature type="repeat" description="15">
    <location>
        <begin position="77"/>
        <end position="78"/>
    </location>
</feature>
<feature type="repeat" description="16">
    <location>
        <begin position="79"/>
        <end position="80"/>
    </location>
</feature>
<feature type="repeat" description="17">
    <location>
        <begin position="81"/>
        <end position="82"/>
    </location>
</feature>
<feature type="repeat" description="18">
    <location>
        <begin position="83"/>
        <end position="84"/>
    </location>
</feature>
<feature type="repeat" description="19">
    <location>
        <begin position="85"/>
        <end position="86"/>
    </location>
</feature>
<feature type="repeat" description="20">
    <location>
        <begin position="87"/>
        <end position="88"/>
    </location>
</feature>
<feature type="repeat" description="21">
    <location>
        <begin position="89"/>
        <end position="90"/>
    </location>
</feature>
<feature type="repeat" description="22">
    <location>
        <begin position="91"/>
        <end position="92"/>
    </location>
</feature>
<feature type="repeat" description="23">
    <location>
        <begin position="93"/>
        <end position="94"/>
    </location>
</feature>
<feature type="repeat" description="24">
    <location>
        <begin position="95"/>
        <end position="96"/>
    </location>
</feature>
<feature type="repeat" description="25">
    <location>
        <begin position="97"/>
        <end position="98"/>
    </location>
</feature>
<feature type="repeat" description="26">
    <location>
        <begin position="99"/>
        <end position="100"/>
    </location>
</feature>
<feature type="repeat" description="27">
    <location>
        <begin position="101"/>
        <end position="102"/>
    </location>
</feature>
<feature type="repeat" description="28">
    <location>
        <begin position="103"/>
        <end position="104"/>
    </location>
</feature>
<feature type="repeat" description="29">
    <location>
        <begin position="105"/>
        <end position="106"/>
    </location>
</feature>
<feature type="repeat" description="30">
    <location>
        <begin position="107"/>
        <end position="108"/>
    </location>
</feature>
<feature type="repeat" description="31">
    <location>
        <begin position="109"/>
        <end position="110"/>
    </location>
</feature>
<feature type="repeat" description="32">
    <location>
        <begin position="111"/>
        <end position="112"/>
    </location>
</feature>
<feature type="repeat" description="33">
    <location>
        <begin position="113"/>
        <end position="114"/>
    </location>
</feature>
<feature type="repeat" description="34">
    <location>
        <begin position="115"/>
        <end position="116"/>
    </location>
</feature>
<feature type="repeat" description="35">
    <location>
        <begin position="117"/>
        <end position="118"/>
    </location>
</feature>
<feature type="repeat" description="36">
    <location>
        <begin position="119"/>
        <end position="120"/>
    </location>
</feature>
<feature type="repeat" description="37">
    <location>
        <begin position="121"/>
        <end position="122"/>
    </location>
</feature>
<feature type="repeat" description="38">
    <location>
        <begin position="123"/>
        <end position="124"/>
    </location>
</feature>
<feature type="repeat" description="39">
    <location>
        <begin position="125"/>
        <end position="126"/>
    </location>
</feature>
<feature type="repeat" description="40">
    <location>
        <begin position="127"/>
        <end position="128"/>
    </location>
</feature>
<feature type="repeat" description="41">
    <location>
        <begin position="129"/>
        <end position="130"/>
    </location>
</feature>
<feature type="repeat" description="42">
    <location>
        <begin position="131"/>
        <end position="132"/>
    </location>
</feature>
<feature type="repeat" description="43">
    <location>
        <begin position="133"/>
        <end position="134"/>
    </location>
</feature>
<feature type="repeat" description="44">
    <location>
        <begin position="135"/>
        <end position="136"/>
    </location>
</feature>
<feature type="repeat" description="45">
    <location>
        <begin position="137"/>
        <end position="138"/>
    </location>
</feature>
<feature type="region of interest" description="Disordered" evidence="1">
    <location>
        <begin position="46"/>
        <end position="134"/>
    </location>
</feature>
<feature type="region of interest" description="45 X 2 AA tandem repeats of G-[TA]">
    <location>
        <begin position="49"/>
        <end position="138"/>
    </location>
</feature>
<feature type="compositionally biased region" description="Gly residues" evidence="1">
    <location>
        <begin position="50"/>
        <end position="134"/>
    </location>
</feature>
<evidence type="ECO:0000256" key="1">
    <source>
        <dbReference type="SAM" id="MobiDB-lite"/>
    </source>
</evidence>
<protein>
    <recommendedName>
        <fullName>Period clock protein</fullName>
    </recommendedName>
    <alternativeName>
        <fullName>p230</fullName>
    </alternativeName>
</protein>